<organism>
    <name type="scientific">Plasmodium falciparum (isolate 3D7)</name>
    <dbReference type="NCBI Taxonomy" id="36329"/>
    <lineage>
        <taxon>Eukaryota</taxon>
        <taxon>Sar</taxon>
        <taxon>Alveolata</taxon>
        <taxon>Apicomplexa</taxon>
        <taxon>Aconoidasida</taxon>
        <taxon>Haemosporida</taxon>
        <taxon>Plasmodiidae</taxon>
        <taxon>Plasmodium</taxon>
        <taxon>Plasmodium (Laverania)</taxon>
    </lineage>
</organism>
<reference key="1">
    <citation type="journal article" date="2002" name="Nature">
        <title>Genome sequence of the human malaria parasite Plasmodium falciparum.</title>
        <authorList>
            <person name="Gardner M.J."/>
            <person name="Hall N."/>
            <person name="Fung E."/>
            <person name="White O."/>
            <person name="Berriman M."/>
            <person name="Hyman R.W."/>
            <person name="Carlton J.M."/>
            <person name="Pain A."/>
            <person name="Nelson K.E."/>
            <person name="Bowman S."/>
            <person name="Paulsen I.T."/>
            <person name="James K.D."/>
            <person name="Eisen J.A."/>
            <person name="Rutherford K.M."/>
            <person name="Salzberg S.L."/>
            <person name="Craig A."/>
            <person name="Kyes S."/>
            <person name="Chan M.-S."/>
            <person name="Nene V."/>
            <person name="Shallom S.J."/>
            <person name="Suh B."/>
            <person name="Peterson J."/>
            <person name="Angiuoli S."/>
            <person name="Pertea M."/>
            <person name="Allen J."/>
            <person name="Selengut J."/>
            <person name="Haft D."/>
            <person name="Mather M.W."/>
            <person name="Vaidya A.B."/>
            <person name="Martin D.M.A."/>
            <person name="Fairlamb A.H."/>
            <person name="Fraunholz M.J."/>
            <person name="Roos D.S."/>
            <person name="Ralph S.A."/>
            <person name="McFadden G.I."/>
            <person name="Cummings L.M."/>
            <person name="Subramanian G.M."/>
            <person name="Mungall C."/>
            <person name="Venter J.C."/>
            <person name="Carucci D.J."/>
            <person name="Hoffman S.L."/>
            <person name="Newbold C."/>
            <person name="Davis R.W."/>
            <person name="Fraser C.M."/>
            <person name="Barrell B.G."/>
        </authorList>
    </citation>
    <scope>NUCLEOTIDE SEQUENCE [LARGE SCALE GENOMIC DNA]</scope>
    <source>
        <strain>3D7</strain>
    </source>
</reference>
<reference key="2">
    <citation type="journal article" date="2008" name="PLoS Pathog.">
        <title>HDP-a novel heme detoxification protein from the malaria parasite.</title>
        <authorList>
            <person name="Jani D."/>
            <person name="Nagarkatti R."/>
            <person name="Beatty W."/>
            <person name="Angel R."/>
            <person name="Slebodnick C."/>
            <person name="Andersen J."/>
            <person name="Kumar S."/>
            <person name="Rathore D."/>
        </authorList>
    </citation>
    <scope>FUNCTION</scope>
    <scope>CATALYTIC ACTIVITY</scope>
    <scope>BIOPHYSICOCHEMICAL PROPERTIES</scope>
    <scope>SUBCELLULAR LOCATION</scope>
</reference>
<reference key="3">
    <citation type="journal article" date="2013" name="Proc. Natl. Acad. Sci. U.S.A.">
        <title>Protein complex directs hemoglobin-to-hemozoin formation in Plasmodium falciparum.</title>
        <authorList>
            <person name="Chugh M."/>
            <person name="Sundararaman V."/>
            <person name="Kumar S."/>
            <person name="Reddy V.S."/>
            <person name="Siddiqui W.A."/>
            <person name="Stuart K.D."/>
            <person name="Malhotra P."/>
        </authorList>
    </citation>
    <scope>FUNCTION</scope>
    <scope>IDENTIFICATION IN THE HEMOZOIN FORMATION COMPLEX</scope>
    <scope>INTERACTION WITH FALCIPAIN 2</scope>
    <scope>SUBCELLULAR LOCATION</scope>
    <scope>DEVELOPMENTAL STAGE</scope>
    <scope>IDENTIFICATION BY MASS SPECTROMETRY</scope>
</reference>
<reference key="4">
    <citation type="journal article" date="2014" name="Sci. Rep.">
        <title>Identification of essential histidine residues involved in heme binding and Hemozoin formation in heme detoxification protein from Plasmodium falciparum.</title>
        <authorList>
            <person name="Nakatani K."/>
            <person name="Ishikawa H."/>
            <person name="Aono S."/>
            <person name="Mizutani Y."/>
        </authorList>
    </citation>
    <scope>FUNCTION</scope>
    <scope>CATALYTIC ACTIVITY</scope>
    <scope>MUTAGENESIS OF HIS-44; HIS-58; HIS-70; HIS-79; HIS-122; HIS-172; HIS-175; HIS-192 AND HIS-197</scope>
</reference>
<reference key="5">
    <citation type="journal article" date="2017" name="J. Med. Chem.">
        <title>Exploring Heme and Hemoglobin Binding Regions of Plasmodium Heme Detoxification Protein for New Antimalarial Discovery.</title>
        <authorList>
            <person name="Gupta P."/>
            <person name="Mehrotra S."/>
            <person name="Sharma A."/>
            <person name="Chugh M."/>
            <person name="Pandey R."/>
            <person name="Kaushik A."/>
            <person name="Khurana S."/>
            <person name="Srivastava N."/>
            <person name="Srivastava T."/>
            <person name="Deshmukh A."/>
            <person name="Panda A."/>
            <person name="Aggarwal P."/>
            <person name="Bhavesh N.S."/>
            <person name="Bhatnagar R.K."/>
            <person name="Mohmmed A."/>
            <person name="Gupta D."/>
            <person name="Malhotra P."/>
        </authorList>
    </citation>
    <scope>FUNCTION</scope>
    <scope>CATALYTIC ACTIVITY</scope>
    <scope>INTERACTION WITH HOST HEMOGLOBIN</scope>
    <scope>MUTAGENESIS OF 1-MET--TYR-87; 120-LEU--PHE-205; 154-LEU--PHE-170; 171-LYS--PHE-205 AND 191-CYS--PHE-205</scope>
</reference>
<protein>
    <recommendedName>
        <fullName>Heme ligase</fullName>
        <ecNumber evidence="2 4 5">4.99.1.8</ecNumber>
    </recommendedName>
    <alternativeName>
        <fullName evidence="6">Heme detoxification protein</fullName>
        <shortName evidence="7">PfHDP</shortName>
    </alternativeName>
    <alternativeName>
        <fullName>Hemozoin synthase</fullName>
    </alternativeName>
</protein>
<gene>
    <name evidence="6" type="primary">HDP</name>
    <name type="ORF">PF14_0446</name>
    <name type="ORF">PF3D7_1446800</name>
</gene>
<evidence type="ECO:0000255" key="1">
    <source>
        <dbReference type="PROSITE-ProRule" id="PRU00082"/>
    </source>
</evidence>
<evidence type="ECO:0000269" key="2">
    <source>
    </source>
</evidence>
<evidence type="ECO:0000269" key="3">
    <source>
    </source>
</evidence>
<evidence type="ECO:0000269" key="4">
    <source>
    </source>
</evidence>
<evidence type="ECO:0000269" key="5">
    <source>
    </source>
</evidence>
<evidence type="ECO:0000303" key="6">
    <source>
    </source>
</evidence>
<evidence type="ECO:0000303" key="7">
    <source>
    </source>
</evidence>
<evidence type="ECO:0000305" key="8">
    <source>
    </source>
</evidence>
<comment type="function">
    <text evidence="2 3 4 5">Heme detoxifying enzyme that converts heme to crystalline hemozoin (beta-hematin) to protect the organism from the toxic effects of heme (PubMed:18437218, PubMed:23471987, PubMed:25138161, PubMed:28949547). During its development, P.falciparum proteolyzes vast amounts of host hemoglobin, leading to heme release (PubMed:18437218).</text>
</comment>
<comment type="catalytic activity">
    <reaction evidence="2 4 5">
        <text>2 Fe(III)-heme b = beta-hematin</text>
        <dbReference type="Rhea" id="RHEA:53712"/>
        <dbReference type="ChEBI" id="CHEBI:55376"/>
        <dbReference type="ChEBI" id="CHEBI:55377"/>
        <dbReference type="EC" id="4.99.1.8"/>
    </reaction>
</comment>
<comment type="biophysicochemical properties">
    <phDependence>
        <text evidence="2">Optimum pH is 4.5-5.2.</text>
    </phDependence>
</comment>
<comment type="subunit">
    <text evidence="3 5">Component of the hemozoin formation complex (HFC) composed of falcipains FP2A and/or FP2B, plasmepsins PMII, PMIII/HAP and PMIV, heme detoxifying protein HDP and falcilysin FLN (PubMed:23471987). The HFC complex is involved in hemoglobin degradation and detoxification of heme in the food vacuole during the asexual blood stage (PubMed:23471987). Interacts with falcipain 2; the interaction is direct and enhances HDP catalytic activity (PubMed:23471987). Interacts with host hemoglobin (PubMed:28949547).</text>
</comment>
<comment type="subcellular location">
    <subcellularLocation>
        <location evidence="2 3">Vacuole</location>
    </subcellularLocation>
    <subcellularLocation>
        <location evidence="2">Host cytoplasm</location>
        <location evidence="2">Host cytosol</location>
    </subcellularLocation>
    <text evidence="2 3">Delivered to the food vacuole, the site of hemozoin formation, via a unique trafficking route (PubMed:18437218, PubMed:23471987). Initially secreted into the cytosol of infected red blood cells (PubMed:18437218). A subsequent endocytosis of host cytosol delivers HDP to the food vacuole (PubMed:18437218).</text>
</comment>
<comment type="developmental stage">
    <text evidence="3">Expressed during the asexual blood stage including in trophozoites (at protein level).</text>
</comment>
<comment type="miscellaneous">
    <text evidence="5 8">HDP is critical for survival, suggesting it could be a potential malaria drug target.</text>
</comment>
<dbReference type="EC" id="4.99.1.8" evidence="2 4 5"/>
<dbReference type="EMBL" id="LN999946">
    <property type="protein sequence ID" value="CZU00163.1"/>
    <property type="molecule type" value="Genomic_DNA"/>
</dbReference>
<dbReference type="RefSeq" id="XP_001348620.1">
    <property type="nucleotide sequence ID" value="XM_001348584.1"/>
</dbReference>
<dbReference type="SMR" id="Q8IL04"/>
<dbReference type="STRING" id="36329.Q8IL04"/>
<dbReference type="BindingDB" id="Q8IL04"/>
<dbReference type="ChEMBL" id="CHEMBL4105720"/>
<dbReference type="PaxDb" id="5833-PF14_0446"/>
<dbReference type="EnsemblProtists" id="CZU00163">
    <property type="protein sequence ID" value="CZU00163"/>
    <property type="gene ID" value="PF3D7_1446800"/>
</dbReference>
<dbReference type="GeneID" id="812028"/>
<dbReference type="KEGG" id="pfa:PF3D7_1446800"/>
<dbReference type="VEuPathDB" id="PlasmoDB:PF3D7_1446800"/>
<dbReference type="HOGENOM" id="CLU_1258320_0_0_1"/>
<dbReference type="InParanoid" id="Q8IL04"/>
<dbReference type="OMA" id="EFKNCDH"/>
<dbReference type="OrthoDB" id="286301at2759"/>
<dbReference type="PhylomeDB" id="Q8IL04"/>
<dbReference type="BioCyc" id="MetaCyc:MONOMER-15023"/>
<dbReference type="BRENDA" id="4.99.1.8">
    <property type="organism ID" value="4889"/>
</dbReference>
<dbReference type="Proteomes" id="UP000001450">
    <property type="component" value="Chromosome 14"/>
</dbReference>
<dbReference type="GO" id="GO:0020020">
    <property type="term" value="C:food vacuole"/>
    <property type="evidence" value="ECO:0000314"/>
    <property type="project" value="UniProtKB"/>
</dbReference>
<dbReference type="GO" id="GO:0030430">
    <property type="term" value="C:host cell cytoplasm"/>
    <property type="evidence" value="ECO:0000314"/>
    <property type="project" value="GeneDB"/>
</dbReference>
<dbReference type="GO" id="GO:0044164">
    <property type="term" value="C:host cell cytosol"/>
    <property type="evidence" value="ECO:0000314"/>
    <property type="project" value="UniProtKB"/>
</dbReference>
<dbReference type="GO" id="GO:0020037">
    <property type="term" value="F:heme binding"/>
    <property type="evidence" value="ECO:0000314"/>
    <property type="project" value="UniProtKB"/>
</dbReference>
<dbReference type="GO" id="GO:0004392">
    <property type="term" value="F:heme oxygenase (decyclizing) activity"/>
    <property type="evidence" value="ECO:0000314"/>
    <property type="project" value="GeneDB"/>
</dbReference>
<dbReference type="GO" id="GO:0016829">
    <property type="term" value="F:lyase activity"/>
    <property type="evidence" value="ECO:0000314"/>
    <property type="project" value="UniProtKB"/>
</dbReference>
<dbReference type="GO" id="GO:0042167">
    <property type="term" value="P:heme catabolic process"/>
    <property type="evidence" value="ECO:0000314"/>
    <property type="project" value="UniProtKB"/>
</dbReference>
<dbReference type="FunFam" id="2.30.180.10:FF:000041">
    <property type="entry name" value="Heme detoxification protein"/>
    <property type="match status" value="1"/>
</dbReference>
<dbReference type="Gene3D" id="2.30.180.10">
    <property type="entry name" value="FAS1 domain"/>
    <property type="match status" value="1"/>
</dbReference>
<dbReference type="InterPro" id="IPR050904">
    <property type="entry name" value="Adhesion/Biosynth-related"/>
</dbReference>
<dbReference type="InterPro" id="IPR036378">
    <property type="entry name" value="FAS1_dom_sf"/>
</dbReference>
<dbReference type="InterPro" id="IPR000782">
    <property type="entry name" value="FAS1_domain"/>
</dbReference>
<dbReference type="PANTHER" id="PTHR10900:SF77">
    <property type="entry name" value="FI19380P1"/>
    <property type="match status" value="1"/>
</dbReference>
<dbReference type="PANTHER" id="PTHR10900">
    <property type="entry name" value="PERIOSTIN-RELATED"/>
    <property type="match status" value="1"/>
</dbReference>
<dbReference type="Pfam" id="PF02469">
    <property type="entry name" value="Fasciclin"/>
    <property type="match status" value="1"/>
</dbReference>
<dbReference type="SMART" id="SM00554">
    <property type="entry name" value="FAS1"/>
    <property type="match status" value="1"/>
</dbReference>
<dbReference type="SUPFAM" id="SSF82153">
    <property type="entry name" value="FAS1 domain"/>
    <property type="match status" value="1"/>
</dbReference>
<dbReference type="PROSITE" id="PS50213">
    <property type="entry name" value="FAS1"/>
    <property type="match status" value="1"/>
</dbReference>
<keyword id="KW-1035">Host cytoplasm</keyword>
<keyword id="KW-0456">Lyase</keyword>
<keyword id="KW-1185">Reference proteome</keyword>
<keyword id="KW-0926">Vacuole</keyword>
<proteinExistence type="evidence at protein level"/>
<accession>Q8IL04</accession>
<accession>A0A144A6G1</accession>
<feature type="chain" id="PRO_0000418492" description="Heme ligase">
    <location>
        <begin position="1"/>
        <end position="205"/>
    </location>
</feature>
<feature type="domain" description="FAS1" evidence="1">
    <location>
        <begin position="48"/>
        <end position="203"/>
    </location>
</feature>
<feature type="region of interest" description="Required for binding to host hemoglobin" evidence="5">
    <location>
        <begin position="154"/>
        <end position="172"/>
    </location>
</feature>
<feature type="region of interest" description="Heme binding domain" evidence="5">
    <location>
        <begin position="171"/>
        <end position="181"/>
    </location>
</feature>
<feature type="region of interest" description="Heme binding domain" evidence="5">
    <location>
        <begin position="191"/>
        <end position="200"/>
    </location>
</feature>
<feature type="site" description="Heme binding" evidence="4">
    <location>
        <position position="122"/>
    </location>
</feature>
<feature type="site" description="Required to bring heme into proper alignment for the reaction" evidence="4">
    <location>
        <position position="172"/>
    </location>
</feature>
<feature type="site" description="Heme binding" evidence="4">
    <location>
        <position position="175"/>
    </location>
</feature>
<feature type="site" description="Required to bring heme into proper alignment for the reaction" evidence="4">
    <location>
        <position position="197"/>
    </location>
</feature>
<feature type="mutagenesis site" description="71% reduction in catalytic activity." evidence="5">
    <location>
        <begin position="1"/>
        <end position="87"/>
    </location>
</feature>
<feature type="mutagenesis site" description="No effect on catalytic activity. 50% reduction in catalytic activity; when associated with A-58, A-70, A-79, A-122, A-172, A-175, A-192 and A-197." evidence="4">
    <original>H</original>
    <variation>A</variation>
    <location>
        <position position="44"/>
    </location>
</feature>
<feature type="mutagenesis site" description="No effect on catalytic activity. 50% reduction in catalytic activity; when associated with A-44, A-70, A-79, A-122, A-172, A-175, A-192 and A-197." evidence="4">
    <original>H</original>
    <variation>A</variation>
    <location>
        <position position="58"/>
    </location>
</feature>
<feature type="mutagenesis site" description="No effect on catalytic activity. 50% reduction in catalytic activity; when associated with A-44, A-58, A-79, A-122, A-172, A-175, A-192 and A-197." evidence="4">
    <original>H</original>
    <variation>A</variation>
    <location>
        <position position="70"/>
    </location>
</feature>
<feature type="mutagenesis site" description="No effect on catalytic activity. 50% reduction in catalytic activity; when associated with A-44, A-58, A-70, A-122, A-172, A-175, A-192 and A-197." evidence="4">
    <original>H</original>
    <variation>A</variation>
    <location>
        <position position="79"/>
    </location>
</feature>
<feature type="mutagenesis site" description="75% reduction in catalytic activity." evidence="5">
    <location>
        <begin position="120"/>
        <end position="205"/>
    </location>
</feature>
<feature type="mutagenesis site" description="50% reduction in catalytic activity. 50% reduction in catalytic activity; when associated with A-44, A-58, A-70, A-79, A-172, A-175, A-192 and A-197." evidence="4">
    <original>H</original>
    <variation>A</variation>
    <location>
        <position position="122"/>
    </location>
</feature>
<feature type="mutagenesis site" description="4% reduction in catalytic activity." evidence="5">
    <location>
        <begin position="154"/>
        <end position="170"/>
    </location>
</feature>
<feature type="mutagenesis site" description="30% reduction in catalytic activity. Slight decrease in heme binding." evidence="5">
    <location>
        <begin position="171"/>
        <end position="205"/>
    </location>
</feature>
<feature type="mutagenesis site" description="50% reduction in catalytic activity. 50% reduction in catalytic activity; when associated with A-44, A-58, A-70, A-79, A-122, A-175, A-192 and A-197." evidence="4">
    <original>H</original>
    <variation>A</variation>
    <location>
        <position position="172"/>
    </location>
</feature>
<feature type="mutagenesis site" description="50% reduction in catalytic activity. 50% reduction in catalytic activity; when associated with A-44, A-58, A-70, A-79, A-122, A-172, A-192 and A-197." evidence="4">
    <original>H</original>
    <variation>A</variation>
    <location>
        <position position="175"/>
    </location>
</feature>
<feature type="mutagenesis site" description="60% reduction in catalytic activity. Decreases heme binding." evidence="5">
    <location>
        <begin position="191"/>
        <end position="205"/>
    </location>
</feature>
<feature type="mutagenesis site" description="No effect on catalytic activity. 50% reduction in catalytic activity; when associated with A-44, A-58, A-70, A-79, A-122, A-172, A-175 and A-197." evidence="4">
    <original>H</original>
    <variation>A</variation>
    <location>
        <position position="192"/>
    </location>
</feature>
<feature type="mutagenesis site" description="50% reduction in catalytic activity. 50% reduction in catalytic activity; when associated with A-44, A-58, A-70, A-79, A-122, A-172, A-175 and A-192." evidence="4">
    <original>H</original>
    <variation>A</variation>
    <location>
        <position position="197"/>
    </location>
</feature>
<name>HDP_PLAF7</name>
<sequence length="205" mass="24337">MKNRFYYNLIIKRLYTRSGGLRKPQKVTNDPESINRKVYWCFEHKPVKRTIINLIYSHNELKIFSNLLNHPTVGSSLIHELSLDGPYTAFFPSNEAMQLINIESFNKLYNDENKLSEFVLNHVTKEYWLYRDLYGSSYQPWLMYNEKREAPEKLRNLLNNDLIVKIEGEFKHCNHSIYLNGSKIIRPNMKCHNGVVHIVDKPIIF</sequence>